<name>RRF2M_ASPFN</name>
<protein>
    <recommendedName>
        <fullName evidence="1">Ribosome-releasing factor 2, mitochondrial</fullName>
        <shortName evidence="1">RRF2mt</shortName>
    </recommendedName>
    <alternativeName>
        <fullName evidence="1">Elongation factor G 2, mitochondrial</fullName>
        <shortName evidence="1">EF-G2mt</shortName>
        <shortName evidence="1">mEF-G 2</shortName>
    </alternativeName>
</protein>
<organism>
    <name type="scientific">Aspergillus flavus (strain ATCC 200026 / FGSC A1120 / IAM 13836 / NRRL 3357 / JCM 12722 / SRRC 167)</name>
    <dbReference type="NCBI Taxonomy" id="332952"/>
    <lineage>
        <taxon>Eukaryota</taxon>
        <taxon>Fungi</taxon>
        <taxon>Dikarya</taxon>
        <taxon>Ascomycota</taxon>
        <taxon>Pezizomycotina</taxon>
        <taxon>Eurotiomycetes</taxon>
        <taxon>Eurotiomycetidae</taxon>
        <taxon>Eurotiales</taxon>
        <taxon>Aspergillaceae</taxon>
        <taxon>Aspergillus</taxon>
        <taxon>Aspergillus subgen. Circumdati</taxon>
    </lineage>
</organism>
<comment type="function">
    <text evidence="1">Mitochondrial GTPase that mediates the disassembly of ribosomes from messenger RNA at the termination of mitochondrial protein biosynthesis. Not involved in the GTP-dependent ribosomal translocation step during translation elongation.</text>
</comment>
<comment type="subcellular location">
    <subcellularLocation>
        <location evidence="1">Mitochondrion</location>
    </subcellularLocation>
</comment>
<comment type="similarity">
    <text evidence="1">Belongs to the TRAFAC class translation factor GTPase superfamily. Classic translation factor GTPase family. EF-G/EF-2 subfamily.</text>
</comment>
<reference key="1">
    <citation type="journal article" date="2015" name="Genome Announc.">
        <title>Genome sequence of Aspergillus flavus NRRL 3357, a strain that causes aflatoxin contamination of food and feed.</title>
        <authorList>
            <person name="Nierman W.C."/>
            <person name="Yu J."/>
            <person name="Fedorova-Abrams N.D."/>
            <person name="Losada L."/>
            <person name="Cleveland T.E."/>
            <person name="Bhatnagar D."/>
            <person name="Bennett J.W."/>
            <person name="Dean R."/>
            <person name="Payne G.A."/>
        </authorList>
    </citation>
    <scope>NUCLEOTIDE SEQUENCE [LARGE SCALE GENOMIC DNA]</scope>
    <source>
        <strain>ATCC 200026 / FGSC A1120 / IAM 13836 / NRRL 3357 / JCM 12722 / SRRC 167</strain>
    </source>
</reference>
<evidence type="ECO:0000255" key="1">
    <source>
        <dbReference type="HAMAP-Rule" id="MF_03059"/>
    </source>
</evidence>
<evidence type="ECO:0000256" key="2">
    <source>
        <dbReference type="SAM" id="MobiDB-lite"/>
    </source>
</evidence>
<gene>
    <name type="primary">mef2</name>
    <name type="ORF">AFLA_057220</name>
</gene>
<feature type="transit peptide" description="Mitochondrion" evidence="1">
    <location>
        <begin position="1"/>
        <end position="15"/>
    </location>
</feature>
<feature type="chain" id="PRO_0000385609" description="Ribosome-releasing factor 2, mitochondrial">
    <location>
        <begin position="16"/>
        <end position="909"/>
    </location>
</feature>
<feature type="domain" description="tr-type G">
    <location>
        <begin position="57"/>
        <end position="367"/>
    </location>
</feature>
<feature type="region of interest" description="Disordered" evidence="2">
    <location>
        <begin position="121"/>
        <end position="148"/>
    </location>
</feature>
<feature type="compositionally biased region" description="Polar residues" evidence="2">
    <location>
        <begin position="127"/>
        <end position="148"/>
    </location>
</feature>
<feature type="binding site" evidence="1">
    <location>
        <begin position="66"/>
        <end position="73"/>
    </location>
    <ligand>
        <name>GTP</name>
        <dbReference type="ChEBI" id="CHEBI:37565"/>
    </ligand>
</feature>
<feature type="binding site" evidence="1">
    <location>
        <begin position="151"/>
        <end position="155"/>
    </location>
    <ligand>
        <name>GTP</name>
        <dbReference type="ChEBI" id="CHEBI:37565"/>
    </ligand>
</feature>
<feature type="binding site" evidence="1">
    <location>
        <begin position="205"/>
        <end position="208"/>
    </location>
    <ligand>
        <name>GTP</name>
        <dbReference type="ChEBI" id="CHEBI:37565"/>
    </ligand>
</feature>
<proteinExistence type="inferred from homology"/>
<accession>B8NDZ1</accession>
<keyword id="KW-0342">GTP-binding</keyword>
<keyword id="KW-0496">Mitochondrion</keyword>
<keyword id="KW-0547">Nucleotide-binding</keyword>
<keyword id="KW-0648">Protein biosynthesis</keyword>
<keyword id="KW-0809">Transit peptide</keyword>
<sequence length="909" mass="98329">MVAAPLLRAHQAARLQSVSTSRLGLNPHVIKSAGRLQLLRGSSFSTATSKWQAGVLDRTRNIGIIAHIDAGKTTTTERMLYYSGFTRRIGDVDEGSTVTDFLPAERARGITIQSAAITFHWPPQTAGDGNTTPQEPQTPRSASSHTVNLIDTPGHADFTFEVMRSLRILDGAVCILDGVAGVEAQTEQVWHQASTYRIPRIVYVNKLDRDGAAFGRTVREVASRLGGWPAVCQIPWFEGGNGRFTGIADAINLQGLRWEEGDGKSVKMFNLEQLASEEPQLAQELKRARVALVELLSEHDEAMVEKFFDCEEDHLAVPPNDILESLRRCLLEEQGRKIIPIFAGASFRNIGVQPLLDAVTNLLPSPPETPEPEVSIGGVKGGLRRLLSGDLLVEQGEKAASAKGKHKKKSAIQAESRNAIEKLQGCALAFKVVNDPKRGVLVYVRVYSGSLDRNSILYNTNLNVSERAPRLLKMYANDAVEVDSIPEGHIGVVAGLKHTRTGDTLVTYSGNKATPPEPLNTLQLRPITVPPPVFFASVEPHSLSEEKRLQESLAMLLREDPSLHVTVDEDSGQTLLSGMGELHLEIARDRLLNDLKAKASMGRIEIGYRECPLGASGPITKIFDKEIAGRKGKAGCTATVEPFDPEETTTEPDPSTLSIQTTDGNQIIIQAPGLEVEVNKKGIEESPLLPPGLDVHALRTALQNGCLAALARGPQFTFPMHGTRVTLTFNPAEHLFGNESTPSALSAAARLATSSALRDLPSGAGTSLMEPVMNVIISVDEASLGAVVHDISSSRGGHIISLDEETPLQTTGITSNPTDDLLPPIDPNKVYAPPDPFQSSTVGIDLPSSANRPRTITAKVPLKEMVGYLKHLRSLSAGRGTFVMSVDRFEKMSAPRQKAVLAELRGDFF</sequence>
<dbReference type="EMBL" id="EQ963477">
    <property type="protein sequence ID" value="EED51459.1"/>
    <property type="molecule type" value="Genomic_DNA"/>
</dbReference>
<dbReference type="RefSeq" id="XP_002378466.1">
    <property type="nucleotide sequence ID" value="XM_002378425.1"/>
</dbReference>
<dbReference type="SMR" id="B8NDZ1"/>
<dbReference type="STRING" id="332952.B8NDZ1"/>
<dbReference type="EnsemblFungi" id="EED51459">
    <property type="protein sequence ID" value="EED51459"/>
    <property type="gene ID" value="AFLA_057220"/>
</dbReference>
<dbReference type="VEuPathDB" id="FungiDB:AFLA_004768"/>
<dbReference type="eggNOG" id="KOG0465">
    <property type="taxonomic scope" value="Eukaryota"/>
</dbReference>
<dbReference type="HOGENOM" id="CLU_002794_4_1_1"/>
<dbReference type="OMA" id="GPQFTFP"/>
<dbReference type="GO" id="GO:0005739">
    <property type="term" value="C:mitochondrion"/>
    <property type="evidence" value="ECO:0007669"/>
    <property type="project" value="UniProtKB-SubCell"/>
</dbReference>
<dbReference type="GO" id="GO:0005525">
    <property type="term" value="F:GTP binding"/>
    <property type="evidence" value="ECO:0007669"/>
    <property type="project" value="UniProtKB-UniRule"/>
</dbReference>
<dbReference type="GO" id="GO:0003924">
    <property type="term" value="F:GTPase activity"/>
    <property type="evidence" value="ECO:0007669"/>
    <property type="project" value="UniProtKB-UniRule"/>
</dbReference>
<dbReference type="GO" id="GO:0000002">
    <property type="term" value="P:mitochondrial genome maintenance"/>
    <property type="evidence" value="ECO:0007669"/>
    <property type="project" value="EnsemblFungi"/>
</dbReference>
<dbReference type="GO" id="GO:0032543">
    <property type="term" value="P:mitochondrial translation"/>
    <property type="evidence" value="ECO:0007669"/>
    <property type="project" value="UniProtKB-UniRule"/>
</dbReference>
<dbReference type="GO" id="GO:0051881">
    <property type="term" value="P:regulation of mitochondrial membrane potential"/>
    <property type="evidence" value="ECO:0007669"/>
    <property type="project" value="EnsemblFungi"/>
</dbReference>
<dbReference type="GO" id="GO:0032790">
    <property type="term" value="P:ribosome disassembly"/>
    <property type="evidence" value="ECO:0007669"/>
    <property type="project" value="UniProtKB-UniRule"/>
</dbReference>
<dbReference type="CDD" id="cd01886">
    <property type="entry name" value="EF-G"/>
    <property type="match status" value="1"/>
</dbReference>
<dbReference type="CDD" id="cd16262">
    <property type="entry name" value="EFG_III"/>
    <property type="match status" value="1"/>
</dbReference>
<dbReference type="CDD" id="cd03713">
    <property type="entry name" value="EFG_mtEFG_C"/>
    <property type="match status" value="1"/>
</dbReference>
<dbReference type="CDD" id="cd04092">
    <property type="entry name" value="mtEFG2_II_like"/>
    <property type="match status" value="1"/>
</dbReference>
<dbReference type="FunFam" id="2.40.30.10:FF:000106">
    <property type="entry name" value="Ribosome-releasing factor 2, mitochondrial"/>
    <property type="match status" value="1"/>
</dbReference>
<dbReference type="FunFam" id="3.30.70.870:FF:000007">
    <property type="entry name" value="Ribosome-releasing factor 2, mitochondrial"/>
    <property type="match status" value="1"/>
</dbReference>
<dbReference type="FunFam" id="3.40.50.300:FF:001636">
    <property type="entry name" value="Ribosome-releasing factor 2, mitochondrial"/>
    <property type="match status" value="1"/>
</dbReference>
<dbReference type="Gene3D" id="3.30.230.10">
    <property type="match status" value="1"/>
</dbReference>
<dbReference type="Gene3D" id="3.30.70.240">
    <property type="match status" value="1"/>
</dbReference>
<dbReference type="Gene3D" id="3.30.70.870">
    <property type="entry name" value="Elongation Factor G (Translational Gtpase), domain 3"/>
    <property type="match status" value="1"/>
</dbReference>
<dbReference type="Gene3D" id="3.40.50.300">
    <property type="entry name" value="P-loop containing nucleotide triphosphate hydrolases"/>
    <property type="match status" value="1"/>
</dbReference>
<dbReference type="Gene3D" id="2.40.30.10">
    <property type="entry name" value="Translation factors"/>
    <property type="match status" value="1"/>
</dbReference>
<dbReference type="HAMAP" id="MF_03059">
    <property type="entry name" value="mEF_G_2"/>
    <property type="match status" value="1"/>
</dbReference>
<dbReference type="InterPro" id="IPR053905">
    <property type="entry name" value="EF-G-like_DII"/>
</dbReference>
<dbReference type="InterPro" id="IPR030851">
    <property type="entry name" value="EFG2"/>
</dbReference>
<dbReference type="InterPro" id="IPR041095">
    <property type="entry name" value="EFG_II"/>
</dbReference>
<dbReference type="InterPro" id="IPR009022">
    <property type="entry name" value="EFG_III"/>
</dbReference>
<dbReference type="InterPro" id="IPR035647">
    <property type="entry name" value="EFG_III/V"/>
</dbReference>
<dbReference type="InterPro" id="IPR035649">
    <property type="entry name" value="EFG_V"/>
</dbReference>
<dbReference type="InterPro" id="IPR000640">
    <property type="entry name" value="EFG_V-like"/>
</dbReference>
<dbReference type="InterPro" id="IPR031157">
    <property type="entry name" value="G_TR_CS"/>
</dbReference>
<dbReference type="InterPro" id="IPR027417">
    <property type="entry name" value="P-loop_NTPase"/>
</dbReference>
<dbReference type="InterPro" id="IPR020568">
    <property type="entry name" value="Ribosomal_Su5_D2-typ_SF"/>
</dbReference>
<dbReference type="InterPro" id="IPR014721">
    <property type="entry name" value="Ribsml_uS5_D2-typ_fold_subgr"/>
</dbReference>
<dbReference type="InterPro" id="IPR005225">
    <property type="entry name" value="Small_GTP-bd"/>
</dbReference>
<dbReference type="InterPro" id="IPR000795">
    <property type="entry name" value="T_Tr_GTP-bd_dom"/>
</dbReference>
<dbReference type="InterPro" id="IPR009000">
    <property type="entry name" value="Transl_B-barrel_sf"/>
</dbReference>
<dbReference type="NCBIfam" id="TIGR00231">
    <property type="entry name" value="small_GTP"/>
    <property type="match status" value="1"/>
</dbReference>
<dbReference type="PANTHER" id="PTHR43261:SF1">
    <property type="entry name" value="RIBOSOME-RELEASING FACTOR 2, MITOCHONDRIAL"/>
    <property type="match status" value="1"/>
</dbReference>
<dbReference type="PANTHER" id="PTHR43261">
    <property type="entry name" value="TRANSLATION ELONGATION FACTOR G-RELATED"/>
    <property type="match status" value="1"/>
</dbReference>
<dbReference type="Pfam" id="PF22042">
    <property type="entry name" value="EF-G_D2"/>
    <property type="match status" value="1"/>
</dbReference>
<dbReference type="Pfam" id="PF00679">
    <property type="entry name" value="EFG_C"/>
    <property type="match status" value="1"/>
</dbReference>
<dbReference type="Pfam" id="PF14492">
    <property type="entry name" value="EFG_III"/>
    <property type="match status" value="1"/>
</dbReference>
<dbReference type="Pfam" id="PF00009">
    <property type="entry name" value="GTP_EFTU"/>
    <property type="match status" value="1"/>
</dbReference>
<dbReference type="PRINTS" id="PR00315">
    <property type="entry name" value="ELONGATNFCT"/>
</dbReference>
<dbReference type="SMART" id="SM00838">
    <property type="entry name" value="EFG_C"/>
    <property type="match status" value="1"/>
</dbReference>
<dbReference type="SUPFAM" id="SSF54980">
    <property type="entry name" value="EF-G C-terminal domain-like"/>
    <property type="match status" value="2"/>
</dbReference>
<dbReference type="SUPFAM" id="SSF52540">
    <property type="entry name" value="P-loop containing nucleoside triphosphate hydrolases"/>
    <property type="match status" value="1"/>
</dbReference>
<dbReference type="SUPFAM" id="SSF54211">
    <property type="entry name" value="Ribosomal protein S5 domain 2-like"/>
    <property type="match status" value="1"/>
</dbReference>
<dbReference type="SUPFAM" id="SSF50447">
    <property type="entry name" value="Translation proteins"/>
    <property type="match status" value="1"/>
</dbReference>
<dbReference type="PROSITE" id="PS00301">
    <property type="entry name" value="G_TR_1"/>
    <property type="match status" value="1"/>
</dbReference>
<dbReference type="PROSITE" id="PS51722">
    <property type="entry name" value="G_TR_2"/>
    <property type="match status" value="1"/>
</dbReference>